<name>SYFA_METSB</name>
<feature type="chain" id="PRO_1000199318" description="Phenylalanine--tRNA ligase alpha subunit">
    <location>
        <begin position="1"/>
        <end position="360"/>
    </location>
</feature>
<feature type="binding site" evidence="1">
    <location>
        <position position="260"/>
    </location>
    <ligand>
        <name>Mg(2+)</name>
        <dbReference type="ChEBI" id="CHEBI:18420"/>
        <note>shared with beta subunit</note>
    </ligand>
</feature>
<reference key="1">
    <citation type="journal article" date="2010" name="J. Bacteriol.">
        <title>Complete genome sequence of the aerobic facultative methanotroph Methylocella silvestris BL2.</title>
        <authorList>
            <person name="Chen Y."/>
            <person name="Crombie A."/>
            <person name="Rahman M.T."/>
            <person name="Dedysh S.N."/>
            <person name="Liesack W."/>
            <person name="Stott M.B."/>
            <person name="Alam M."/>
            <person name="Theisen A.R."/>
            <person name="Murrell J.C."/>
            <person name="Dunfield P.F."/>
        </authorList>
    </citation>
    <scope>NUCLEOTIDE SEQUENCE [LARGE SCALE GENOMIC DNA]</scope>
    <source>
        <strain>DSM 15510 / CIP 108128 / LMG 27833 / NCIMB 13906 / BL2</strain>
    </source>
</reference>
<dbReference type="EC" id="6.1.1.20" evidence="1"/>
<dbReference type="EMBL" id="CP001280">
    <property type="protein sequence ID" value="ACK50391.1"/>
    <property type="molecule type" value="Genomic_DNA"/>
</dbReference>
<dbReference type="RefSeq" id="WP_012590461.1">
    <property type="nucleotide sequence ID" value="NC_011666.1"/>
</dbReference>
<dbReference type="SMR" id="B8ESQ6"/>
<dbReference type="STRING" id="395965.Msil_1426"/>
<dbReference type="KEGG" id="msl:Msil_1426"/>
<dbReference type="eggNOG" id="COG0016">
    <property type="taxonomic scope" value="Bacteria"/>
</dbReference>
<dbReference type="HOGENOM" id="CLU_025086_0_1_5"/>
<dbReference type="OrthoDB" id="9800719at2"/>
<dbReference type="Proteomes" id="UP000002257">
    <property type="component" value="Chromosome"/>
</dbReference>
<dbReference type="GO" id="GO:0005737">
    <property type="term" value="C:cytoplasm"/>
    <property type="evidence" value="ECO:0007669"/>
    <property type="project" value="UniProtKB-SubCell"/>
</dbReference>
<dbReference type="GO" id="GO:0005524">
    <property type="term" value="F:ATP binding"/>
    <property type="evidence" value="ECO:0007669"/>
    <property type="project" value="UniProtKB-UniRule"/>
</dbReference>
<dbReference type="GO" id="GO:0000287">
    <property type="term" value="F:magnesium ion binding"/>
    <property type="evidence" value="ECO:0007669"/>
    <property type="project" value="UniProtKB-UniRule"/>
</dbReference>
<dbReference type="GO" id="GO:0004826">
    <property type="term" value="F:phenylalanine-tRNA ligase activity"/>
    <property type="evidence" value="ECO:0007669"/>
    <property type="project" value="UniProtKB-UniRule"/>
</dbReference>
<dbReference type="GO" id="GO:0000049">
    <property type="term" value="F:tRNA binding"/>
    <property type="evidence" value="ECO:0007669"/>
    <property type="project" value="InterPro"/>
</dbReference>
<dbReference type="GO" id="GO:0006432">
    <property type="term" value="P:phenylalanyl-tRNA aminoacylation"/>
    <property type="evidence" value="ECO:0007669"/>
    <property type="project" value="UniProtKB-UniRule"/>
</dbReference>
<dbReference type="CDD" id="cd00496">
    <property type="entry name" value="PheRS_alpha_core"/>
    <property type="match status" value="1"/>
</dbReference>
<dbReference type="FunFam" id="3.30.930.10:FF:000003">
    <property type="entry name" value="Phenylalanine--tRNA ligase alpha subunit"/>
    <property type="match status" value="1"/>
</dbReference>
<dbReference type="Gene3D" id="3.30.930.10">
    <property type="entry name" value="Bira Bifunctional Protein, Domain 2"/>
    <property type="match status" value="1"/>
</dbReference>
<dbReference type="HAMAP" id="MF_00281">
    <property type="entry name" value="Phe_tRNA_synth_alpha1"/>
    <property type="match status" value="1"/>
</dbReference>
<dbReference type="InterPro" id="IPR006195">
    <property type="entry name" value="aa-tRNA-synth_II"/>
</dbReference>
<dbReference type="InterPro" id="IPR045864">
    <property type="entry name" value="aa-tRNA-synth_II/BPL/LPL"/>
</dbReference>
<dbReference type="InterPro" id="IPR004529">
    <property type="entry name" value="Phe-tRNA-synth_IIc_asu"/>
</dbReference>
<dbReference type="InterPro" id="IPR004188">
    <property type="entry name" value="Phe-tRNA_ligase_II_N"/>
</dbReference>
<dbReference type="InterPro" id="IPR022911">
    <property type="entry name" value="Phe_tRNA_ligase_alpha1_bac"/>
</dbReference>
<dbReference type="InterPro" id="IPR002319">
    <property type="entry name" value="Phenylalanyl-tRNA_Synthase"/>
</dbReference>
<dbReference type="InterPro" id="IPR010978">
    <property type="entry name" value="tRNA-bd_arm"/>
</dbReference>
<dbReference type="NCBIfam" id="TIGR00468">
    <property type="entry name" value="pheS"/>
    <property type="match status" value="1"/>
</dbReference>
<dbReference type="PANTHER" id="PTHR11538:SF41">
    <property type="entry name" value="PHENYLALANINE--TRNA LIGASE, MITOCHONDRIAL"/>
    <property type="match status" value="1"/>
</dbReference>
<dbReference type="PANTHER" id="PTHR11538">
    <property type="entry name" value="PHENYLALANYL-TRNA SYNTHETASE"/>
    <property type="match status" value="1"/>
</dbReference>
<dbReference type="Pfam" id="PF02912">
    <property type="entry name" value="Phe_tRNA-synt_N"/>
    <property type="match status" value="1"/>
</dbReference>
<dbReference type="Pfam" id="PF01409">
    <property type="entry name" value="tRNA-synt_2d"/>
    <property type="match status" value="1"/>
</dbReference>
<dbReference type="SUPFAM" id="SSF55681">
    <property type="entry name" value="Class II aaRS and biotin synthetases"/>
    <property type="match status" value="1"/>
</dbReference>
<dbReference type="SUPFAM" id="SSF46589">
    <property type="entry name" value="tRNA-binding arm"/>
    <property type="match status" value="1"/>
</dbReference>
<dbReference type="PROSITE" id="PS50862">
    <property type="entry name" value="AA_TRNA_LIGASE_II"/>
    <property type="match status" value="1"/>
</dbReference>
<comment type="catalytic activity">
    <reaction evidence="1">
        <text>tRNA(Phe) + L-phenylalanine + ATP = L-phenylalanyl-tRNA(Phe) + AMP + diphosphate + H(+)</text>
        <dbReference type="Rhea" id="RHEA:19413"/>
        <dbReference type="Rhea" id="RHEA-COMP:9668"/>
        <dbReference type="Rhea" id="RHEA-COMP:9699"/>
        <dbReference type="ChEBI" id="CHEBI:15378"/>
        <dbReference type="ChEBI" id="CHEBI:30616"/>
        <dbReference type="ChEBI" id="CHEBI:33019"/>
        <dbReference type="ChEBI" id="CHEBI:58095"/>
        <dbReference type="ChEBI" id="CHEBI:78442"/>
        <dbReference type="ChEBI" id="CHEBI:78531"/>
        <dbReference type="ChEBI" id="CHEBI:456215"/>
        <dbReference type="EC" id="6.1.1.20"/>
    </reaction>
</comment>
<comment type="cofactor">
    <cofactor evidence="1">
        <name>Mg(2+)</name>
        <dbReference type="ChEBI" id="CHEBI:18420"/>
    </cofactor>
    <text evidence="1">Binds 2 magnesium ions per tetramer.</text>
</comment>
<comment type="subunit">
    <text evidence="1">Tetramer of two alpha and two beta subunits.</text>
</comment>
<comment type="subcellular location">
    <subcellularLocation>
        <location evidence="1">Cytoplasm</location>
    </subcellularLocation>
</comment>
<comment type="similarity">
    <text evidence="1">Belongs to the class-II aminoacyl-tRNA synthetase family. Phe-tRNA synthetase alpha subunit type 1 subfamily.</text>
</comment>
<proteinExistence type="inferred from homology"/>
<sequence length="360" mass="39970">MADLEDLKTALLSDIAAAADESALEAVRVASLGKKGSISALLSGLGKMSPDERKTEGAAINALKDAVNTALSARRGVLKDAALEARLANETLDVTLPVRPQGAAAGRIHPISQVMDELAEIFADMGFSIAEGPDIETDDYNFTKLNFPPDHPARDMHDTFFFHPDKHGRRKVLRTHTSPVQVRTMLAQKPPIRVICPGRTYRCDSDQTHTPMFHQVEGLVIDRSSNLGHLKWILEEFLKAFFETSTVNLRFRPSYFPFTEPSMEVDVQCSRKDGEIRFGEGSDWLEILGCGMVHPNVLRNCGLDPEIFQGFAWGIGIDRLAMLKYGMPDLRAFFEADVRWLKHYGFRPLDFPSLASGLSP</sequence>
<keyword id="KW-0030">Aminoacyl-tRNA synthetase</keyword>
<keyword id="KW-0067">ATP-binding</keyword>
<keyword id="KW-0963">Cytoplasm</keyword>
<keyword id="KW-0436">Ligase</keyword>
<keyword id="KW-0460">Magnesium</keyword>
<keyword id="KW-0479">Metal-binding</keyword>
<keyword id="KW-0547">Nucleotide-binding</keyword>
<keyword id="KW-0648">Protein biosynthesis</keyword>
<keyword id="KW-1185">Reference proteome</keyword>
<gene>
    <name evidence="1" type="primary">pheS</name>
    <name type="ordered locus">Msil_1426</name>
</gene>
<evidence type="ECO:0000255" key="1">
    <source>
        <dbReference type="HAMAP-Rule" id="MF_00281"/>
    </source>
</evidence>
<protein>
    <recommendedName>
        <fullName evidence="1">Phenylalanine--tRNA ligase alpha subunit</fullName>
        <ecNumber evidence="1">6.1.1.20</ecNumber>
    </recommendedName>
    <alternativeName>
        <fullName evidence="1">Phenylalanyl-tRNA synthetase alpha subunit</fullName>
        <shortName evidence="1">PheRS</shortName>
    </alternativeName>
</protein>
<organism>
    <name type="scientific">Methylocella silvestris (strain DSM 15510 / CIP 108128 / LMG 27833 / NCIMB 13906 / BL2)</name>
    <dbReference type="NCBI Taxonomy" id="395965"/>
    <lineage>
        <taxon>Bacteria</taxon>
        <taxon>Pseudomonadati</taxon>
        <taxon>Pseudomonadota</taxon>
        <taxon>Alphaproteobacteria</taxon>
        <taxon>Hyphomicrobiales</taxon>
        <taxon>Beijerinckiaceae</taxon>
        <taxon>Methylocella</taxon>
    </lineage>
</organism>
<accession>B8ESQ6</accession>